<reference key="1">
    <citation type="journal article" date="2009" name="PLoS Genet.">
        <title>Organised genome dynamics in the Escherichia coli species results in highly diverse adaptive paths.</title>
        <authorList>
            <person name="Touchon M."/>
            <person name="Hoede C."/>
            <person name="Tenaillon O."/>
            <person name="Barbe V."/>
            <person name="Baeriswyl S."/>
            <person name="Bidet P."/>
            <person name="Bingen E."/>
            <person name="Bonacorsi S."/>
            <person name="Bouchier C."/>
            <person name="Bouvet O."/>
            <person name="Calteau A."/>
            <person name="Chiapello H."/>
            <person name="Clermont O."/>
            <person name="Cruveiller S."/>
            <person name="Danchin A."/>
            <person name="Diard M."/>
            <person name="Dossat C."/>
            <person name="Karoui M.E."/>
            <person name="Frapy E."/>
            <person name="Garry L."/>
            <person name="Ghigo J.M."/>
            <person name="Gilles A.M."/>
            <person name="Johnson J."/>
            <person name="Le Bouguenec C."/>
            <person name="Lescat M."/>
            <person name="Mangenot S."/>
            <person name="Martinez-Jehanne V."/>
            <person name="Matic I."/>
            <person name="Nassif X."/>
            <person name="Oztas S."/>
            <person name="Petit M.A."/>
            <person name="Pichon C."/>
            <person name="Rouy Z."/>
            <person name="Ruf C.S."/>
            <person name="Schneider D."/>
            <person name="Tourret J."/>
            <person name="Vacherie B."/>
            <person name="Vallenet D."/>
            <person name="Medigue C."/>
            <person name="Rocha E.P.C."/>
            <person name="Denamur E."/>
        </authorList>
    </citation>
    <scope>NUCLEOTIDE SEQUENCE [LARGE SCALE GENOMIC DNA]</scope>
    <source>
        <strain>ED1a</strain>
    </source>
</reference>
<evidence type="ECO:0000255" key="1">
    <source>
        <dbReference type="HAMAP-Rule" id="MF_01152"/>
    </source>
</evidence>
<feature type="chain" id="PRO_1000164261" description="Chaperone protein DnaJ">
    <location>
        <begin position="1"/>
        <end position="376"/>
    </location>
</feature>
<feature type="domain" description="J" evidence="1">
    <location>
        <begin position="5"/>
        <end position="70"/>
    </location>
</feature>
<feature type="repeat" description="CXXCXGXG motif">
    <location>
        <begin position="144"/>
        <end position="151"/>
    </location>
</feature>
<feature type="repeat" description="CXXCXGXG motif">
    <location>
        <begin position="161"/>
        <end position="168"/>
    </location>
</feature>
<feature type="repeat" description="CXXCXGXG motif">
    <location>
        <begin position="183"/>
        <end position="190"/>
    </location>
</feature>
<feature type="repeat" description="CXXCXGXG motif">
    <location>
        <begin position="197"/>
        <end position="204"/>
    </location>
</feature>
<feature type="zinc finger region" description="CR-type" evidence="1">
    <location>
        <begin position="131"/>
        <end position="209"/>
    </location>
</feature>
<feature type="binding site" evidence="1">
    <location>
        <position position="144"/>
    </location>
    <ligand>
        <name>Zn(2+)</name>
        <dbReference type="ChEBI" id="CHEBI:29105"/>
        <label>1</label>
    </ligand>
</feature>
<feature type="binding site" evidence="1">
    <location>
        <position position="147"/>
    </location>
    <ligand>
        <name>Zn(2+)</name>
        <dbReference type="ChEBI" id="CHEBI:29105"/>
        <label>1</label>
    </ligand>
</feature>
<feature type="binding site" evidence="1">
    <location>
        <position position="161"/>
    </location>
    <ligand>
        <name>Zn(2+)</name>
        <dbReference type="ChEBI" id="CHEBI:29105"/>
        <label>2</label>
    </ligand>
</feature>
<feature type="binding site" evidence="1">
    <location>
        <position position="164"/>
    </location>
    <ligand>
        <name>Zn(2+)</name>
        <dbReference type="ChEBI" id="CHEBI:29105"/>
        <label>2</label>
    </ligand>
</feature>
<feature type="binding site" evidence="1">
    <location>
        <position position="183"/>
    </location>
    <ligand>
        <name>Zn(2+)</name>
        <dbReference type="ChEBI" id="CHEBI:29105"/>
        <label>2</label>
    </ligand>
</feature>
<feature type="binding site" evidence="1">
    <location>
        <position position="186"/>
    </location>
    <ligand>
        <name>Zn(2+)</name>
        <dbReference type="ChEBI" id="CHEBI:29105"/>
        <label>2</label>
    </ligand>
</feature>
<feature type="binding site" evidence="1">
    <location>
        <position position="197"/>
    </location>
    <ligand>
        <name>Zn(2+)</name>
        <dbReference type="ChEBI" id="CHEBI:29105"/>
        <label>1</label>
    </ligand>
</feature>
<feature type="binding site" evidence="1">
    <location>
        <position position="200"/>
    </location>
    <ligand>
        <name>Zn(2+)</name>
        <dbReference type="ChEBI" id="CHEBI:29105"/>
        <label>1</label>
    </ligand>
</feature>
<proteinExistence type="inferred from homology"/>
<dbReference type="EMBL" id="CU928162">
    <property type="protein sequence ID" value="CAR06237.1"/>
    <property type="molecule type" value="Genomic_DNA"/>
</dbReference>
<dbReference type="RefSeq" id="WP_001118464.1">
    <property type="nucleotide sequence ID" value="NC_011745.1"/>
</dbReference>
<dbReference type="SMR" id="B7MNM2"/>
<dbReference type="GeneID" id="93777428"/>
<dbReference type="KEGG" id="ecq:ECED1_0014"/>
<dbReference type="HOGENOM" id="CLU_017633_0_7_6"/>
<dbReference type="Proteomes" id="UP000000748">
    <property type="component" value="Chromosome"/>
</dbReference>
<dbReference type="GO" id="GO:0005737">
    <property type="term" value="C:cytoplasm"/>
    <property type="evidence" value="ECO:0007669"/>
    <property type="project" value="UniProtKB-SubCell"/>
</dbReference>
<dbReference type="GO" id="GO:0005524">
    <property type="term" value="F:ATP binding"/>
    <property type="evidence" value="ECO:0007669"/>
    <property type="project" value="InterPro"/>
</dbReference>
<dbReference type="GO" id="GO:0031072">
    <property type="term" value="F:heat shock protein binding"/>
    <property type="evidence" value="ECO:0007669"/>
    <property type="project" value="InterPro"/>
</dbReference>
<dbReference type="GO" id="GO:0051082">
    <property type="term" value="F:unfolded protein binding"/>
    <property type="evidence" value="ECO:0007669"/>
    <property type="project" value="UniProtKB-UniRule"/>
</dbReference>
<dbReference type="GO" id="GO:0008270">
    <property type="term" value="F:zinc ion binding"/>
    <property type="evidence" value="ECO:0007669"/>
    <property type="project" value="UniProtKB-UniRule"/>
</dbReference>
<dbReference type="GO" id="GO:0051085">
    <property type="term" value="P:chaperone cofactor-dependent protein refolding"/>
    <property type="evidence" value="ECO:0007669"/>
    <property type="project" value="TreeGrafter"/>
</dbReference>
<dbReference type="GO" id="GO:0006260">
    <property type="term" value="P:DNA replication"/>
    <property type="evidence" value="ECO:0007669"/>
    <property type="project" value="UniProtKB-KW"/>
</dbReference>
<dbReference type="GO" id="GO:0042026">
    <property type="term" value="P:protein refolding"/>
    <property type="evidence" value="ECO:0007669"/>
    <property type="project" value="TreeGrafter"/>
</dbReference>
<dbReference type="GO" id="GO:0009408">
    <property type="term" value="P:response to heat"/>
    <property type="evidence" value="ECO:0007669"/>
    <property type="project" value="InterPro"/>
</dbReference>
<dbReference type="CDD" id="cd06257">
    <property type="entry name" value="DnaJ"/>
    <property type="match status" value="1"/>
</dbReference>
<dbReference type="CDD" id="cd10747">
    <property type="entry name" value="DnaJ_C"/>
    <property type="match status" value="1"/>
</dbReference>
<dbReference type="CDD" id="cd10719">
    <property type="entry name" value="DnaJ_zf"/>
    <property type="match status" value="1"/>
</dbReference>
<dbReference type="FunFam" id="1.10.287.110:FF:000003">
    <property type="entry name" value="Molecular chaperone DnaJ"/>
    <property type="match status" value="1"/>
</dbReference>
<dbReference type="FunFam" id="2.10.230.10:FF:000002">
    <property type="entry name" value="Molecular chaperone DnaJ"/>
    <property type="match status" value="1"/>
</dbReference>
<dbReference type="FunFam" id="2.60.260.20:FF:000004">
    <property type="entry name" value="Molecular chaperone DnaJ"/>
    <property type="match status" value="1"/>
</dbReference>
<dbReference type="Gene3D" id="1.10.287.110">
    <property type="entry name" value="DnaJ domain"/>
    <property type="match status" value="1"/>
</dbReference>
<dbReference type="Gene3D" id="2.10.230.10">
    <property type="entry name" value="Heat shock protein DnaJ, cysteine-rich domain"/>
    <property type="match status" value="1"/>
</dbReference>
<dbReference type="Gene3D" id="2.60.260.20">
    <property type="entry name" value="Urease metallochaperone UreE, N-terminal domain"/>
    <property type="match status" value="2"/>
</dbReference>
<dbReference type="HAMAP" id="MF_01152">
    <property type="entry name" value="DnaJ"/>
    <property type="match status" value="1"/>
</dbReference>
<dbReference type="InterPro" id="IPR012724">
    <property type="entry name" value="DnaJ"/>
</dbReference>
<dbReference type="InterPro" id="IPR002939">
    <property type="entry name" value="DnaJ_C"/>
</dbReference>
<dbReference type="InterPro" id="IPR001623">
    <property type="entry name" value="DnaJ_domain"/>
</dbReference>
<dbReference type="InterPro" id="IPR018253">
    <property type="entry name" value="DnaJ_domain_CS"/>
</dbReference>
<dbReference type="InterPro" id="IPR008971">
    <property type="entry name" value="HSP40/DnaJ_pept-bd"/>
</dbReference>
<dbReference type="InterPro" id="IPR001305">
    <property type="entry name" value="HSP_DnaJ_Cys-rich_dom"/>
</dbReference>
<dbReference type="InterPro" id="IPR036410">
    <property type="entry name" value="HSP_DnaJ_Cys-rich_dom_sf"/>
</dbReference>
<dbReference type="InterPro" id="IPR036869">
    <property type="entry name" value="J_dom_sf"/>
</dbReference>
<dbReference type="NCBIfam" id="TIGR02349">
    <property type="entry name" value="DnaJ_bact"/>
    <property type="match status" value="1"/>
</dbReference>
<dbReference type="NCBIfam" id="NF008035">
    <property type="entry name" value="PRK10767.1"/>
    <property type="match status" value="1"/>
</dbReference>
<dbReference type="PANTHER" id="PTHR43096:SF48">
    <property type="entry name" value="CHAPERONE PROTEIN DNAJ"/>
    <property type="match status" value="1"/>
</dbReference>
<dbReference type="PANTHER" id="PTHR43096">
    <property type="entry name" value="DNAJ HOMOLOG 1, MITOCHONDRIAL-RELATED"/>
    <property type="match status" value="1"/>
</dbReference>
<dbReference type="Pfam" id="PF00226">
    <property type="entry name" value="DnaJ"/>
    <property type="match status" value="1"/>
</dbReference>
<dbReference type="Pfam" id="PF01556">
    <property type="entry name" value="DnaJ_C"/>
    <property type="match status" value="1"/>
</dbReference>
<dbReference type="Pfam" id="PF00684">
    <property type="entry name" value="DnaJ_CXXCXGXG"/>
    <property type="match status" value="1"/>
</dbReference>
<dbReference type="PRINTS" id="PR00625">
    <property type="entry name" value="JDOMAIN"/>
</dbReference>
<dbReference type="SMART" id="SM00271">
    <property type="entry name" value="DnaJ"/>
    <property type="match status" value="1"/>
</dbReference>
<dbReference type="SUPFAM" id="SSF46565">
    <property type="entry name" value="Chaperone J-domain"/>
    <property type="match status" value="1"/>
</dbReference>
<dbReference type="SUPFAM" id="SSF57938">
    <property type="entry name" value="DnaJ/Hsp40 cysteine-rich domain"/>
    <property type="match status" value="1"/>
</dbReference>
<dbReference type="SUPFAM" id="SSF49493">
    <property type="entry name" value="HSP40/DnaJ peptide-binding domain"/>
    <property type="match status" value="2"/>
</dbReference>
<dbReference type="PROSITE" id="PS00636">
    <property type="entry name" value="DNAJ_1"/>
    <property type="match status" value="1"/>
</dbReference>
<dbReference type="PROSITE" id="PS50076">
    <property type="entry name" value="DNAJ_2"/>
    <property type="match status" value="1"/>
</dbReference>
<dbReference type="PROSITE" id="PS51188">
    <property type="entry name" value="ZF_CR"/>
    <property type="match status" value="1"/>
</dbReference>
<keyword id="KW-0143">Chaperone</keyword>
<keyword id="KW-0963">Cytoplasm</keyword>
<keyword id="KW-0235">DNA replication</keyword>
<keyword id="KW-0479">Metal-binding</keyword>
<keyword id="KW-0677">Repeat</keyword>
<keyword id="KW-0346">Stress response</keyword>
<keyword id="KW-0862">Zinc</keyword>
<keyword id="KW-0863">Zinc-finger</keyword>
<gene>
    <name evidence="1" type="primary">dnaJ</name>
    <name type="ordered locus">ECED1_0014</name>
</gene>
<name>DNAJ_ECO81</name>
<protein>
    <recommendedName>
        <fullName evidence="1">Chaperone protein DnaJ</fullName>
    </recommendedName>
</protein>
<organism>
    <name type="scientific">Escherichia coli O81 (strain ED1a)</name>
    <dbReference type="NCBI Taxonomy" id="585397"/>
    <lineage>
        <taxon>Bacteria</taxon>
        <taxon>Pseudomonadati</taxon>
        <taxon>Pseudomonadota</taxon>
        <taxon>Gammaproteobacteria</taxon>
        <taxon>Enterobacterales</taxon>
        <taxon>Enterobacteriaceae</taxon>
        <taxon>Escherichia</taxon>
    </lineage>
</organism>
<sequence>MAKQDYYEILGVSKTAEEREIKKAYKRLAMKYHPDRNQGDKEAEAKFKEIKEAYEVLTDSQKRAAYDQYGHAAFEQGGMGGGGFGGGADFSDIFGDVFGDIFGGGRGRQRAARGADLRYNMELTLEEAVRGVTKEIRIPTLEECDVCHGSGAKPGTQPQTCPTCHGSGQVQMRQGFFAVQQTCPHCQGRGTLIKDPCNKCHGHGRVERSKTLSVKIPAGVDTGDRIRLAGEGEAGEHGAPAGDLYVQVQVKQHPIFEREGNNLYCEVPINFAMAALGGEIEVPTLDGRVKLKVPGETQTGKLFRMRGKGVKSVRGGAQGDLLCRVVVETPVGLNEKQKQLLQELQESFGGPTGEHNSPRSKSFFDGVKKFFDDLTR</sequence>
<accession>B7MNM2</accession>
<comment type="function">
    <text evidence="1">Participates actively in the response to hyperosmotic and heat shock by preventing the aggregation of stress-denatured proteins and by disaggregating proteins, also in an autonomous, DnaK-independent fashion. Unfolded proteins bind initially to DnaJ; upon interaction with the DnaJ-bound protein, DnaK hydrolyzes its bound ATP, resulting in the formation of a stable complex. GrpE releases ADP from DnaK; ATP binding to DnaK triggers the release of the substrate protein, thus completing the reaction cycle. Several rounds of ATP-dependent interactions between DnaJ, DnaK and GrpE are required for fully efficient folding. Also involved, together with DnaK and GrpE, in the DNA replication of plasmids through activation of initiation proteins.</text>
</comment>
<comment type="cofactor">
    <cofactor evidence="1">
        <name>Zn(2+)</name>
        <dbReference type="ChEBI" id="CHEBI:29105"/>
    </cofactor>
    <text evidence="1">Binds 2 Zn(2+) ions per monomer.</text>
</comment>
<comment type="subunit">
    <text evidence="1">Homodimer.</text>
</comment>
<comment type="subcellular location">
    <subcellularLocation>
        <location evidence="1">Cytoplasm</location>
    </subcellularLocation>
</comment>
<comment type="domain">
    <text evidence="1">The J domain is necessary and sufficient to stimulate DnaK ATPase activity. Zinc center 1 plays an important role in the autonomous, DnaK-independent chaperone activity of DnaJ. Zinc center 2 is essential for interaction with DnaK and for DnaJ activity.</text>
</comment>
<comment type="similarity">
    <text evidence="1">Belongs to the DnaJ family.</text>
</comment>